<evidence type="ECO:0000250" key="1">
    <source>
        <dbReference type="UniProtKB" id="P48729"/>
    </source>
</evidence>
<evidence type="ECO:0000250" key="2">
    <source>
        <dbReference type="UniProtKB" id="Q8BK63"/>
    </source>
</evidence>
<evidence type="ECO:0000255" key="3">
    <source>
        <dbReference type="PROSITE-ProRule" id="PRU00159"/>
    </source>
</evidence>
<evidence type="ECO:0000255" key="4">
    <source>
        <dbReference type="PROSITE-ProRule" id="PRU10027"/>
    </source>
</evidence>
<evidence type="ECO:0000305" key="5"/>
<feature type="chain" id="PRO_0000192824" description="Casein kinase I isoform alpha">
    <location>
        <begin position="1" status="less than"/>
        <end position="125" status="greater than"/>
    </location>
</feature>
<feature type="domain" description="Protein kinase" evidence="3">
    <location>
        <begin position="1" status="less than"/>
        <end position="125" status="greater than"/>
    </location>
</feature>
<feature type="active site" description="Proton acceptor" evidence="3 4">
    <location>
        <position position="97"/>
    </location>
</feature>
<feature type="binding site" evidence="3">
    <location>
        <position position="7"/>
    </location>
    <ligand>
        <name>ATP</name>
        <dbReference type="ChEBI" id="CHEBI:30616"/>
    </ligand>
</feature>
<feature type="non-terminal residue">
    <location>
        <position position="1"/>
    </location>
</feature>
<feature type="non-terminal residue">
    <location>
        <position position="125"/>
    </location>
</feature>
<accession>O19175</accession>
<organism>
    <name type="scientific">Sus scrofa</name>
    <name type="common">Pig</name>
    <dbReference type="NCBI Taxonomy" id="9823"/>
    <lineage>
        <taxon>Eukaryota</taxon>
        <taxon>Metazoa</taxon>
        <taxon>Chordata</taxon>
        <taxon>Craniata</taxon>
        <taxon>Vertebrata</taxon>
        <taxon>Euteleostomi</taxon>
        <taxon>Mammalia</taxon>
        <taxon>Eutheria</taxon>
        <taxon>Laurasiatheria</taxon>
        <taxon>Artiodactyla</taxon>
        <taxon>Suina</taxon>
        <taxon>Suidae</taxon>
        <taxon>Sus</taxon>
    </lineage>
</organism>
<keyword id="KW-0067">ATP-binding</keyword>
<keyword id="KW-0131">Cell cycle</keyword>
<keyword id="KW-0132">Cell division</keyword>
<keyword id="KW-0966">Cell projection</keyword>
<keyword id="KW-0137">Centromere</keyword>
<keyword id="KW-0158">Chromosome</keyword>
<keyword id="KW-0963">Cytoplasm</keyword>
<keyword id="KW-0206">Cytoskeleton</keyword>
<keyword id="KW-0418">Kinase</keyword>
<keyword id="KW-0995">Kinetochore</keyword>
<keyword id="KW-0498">Mitosis</keyword>
<keyword id="KW-0547">Nucleotide-binding</keyword>
<keyword id="KW-0539">Nucleus</keyword>
<keyword id="KW-0597">Phosphoprotein</keyword>
<keyword id="KW-1185">Reference proteome</keyword>
<keyword id="KW-0723">Serine/threonine-protein kinase</keyword>
<keyword id="KW-0808">Transferase</keyword>
<keyword id="KW-0879">Wnt signaling pathway</keyword>
<comment type="function">
    <text evidence="1 2">Casein kinases are operationally defined by their preferential utilization of acidic proteins such as caseins as substrates. It can phosphorylate a large number of proteins. Participates in Wnt signaling. Phosphorylates CTNNB1 at 'Ser-45' (By similarity). May phosphorylate PER1 and PER2 (By similarity). May play a role in segregating chromosomes during mitosis. May play a role in keratin cytoskeleton disassembly and thereby, it may regulate epithelial cell migration. Acts as a positive regulator of mTORC1 and mTORC2 signaling in response to nutrients by mediating phosphorylation of DEPTOR inhibitor (By similarity). Acts as an inhibitor of NLRP3 inflammasome assembly by mediating phosphorylation of NLRP3 (By similarity).</text>
</comment>
<comment type="catalytic activity">
    <reaction>
        <text>L-seryl-[protein] + ATP = O-phospho-L-seryl-[protein] + ADP + H(+)</text>
        <dbReference type="Rhea" id="RHEA:17989"/>
        <dbReference type="Rhea" id="RHEA-COMP:9863"/>
        <dbReference type="Rhea" id="RHEA-COMP:11604"/>
        <dbReference type="ChEBI" id="CHEBI:15378"/>
        <dbReference type="ChEBI" id="CHEBI:29999"/>
        <dbReference type="ChEBI" id="CHEBI:30616"/>
        <dbReference type="ChEBI" id="CHEBI:83421"/>
        <dbReference type="ChEBI" id="CHEBI:456216"/>
        <dbReference type="EC" id="2.7.11.1"/>
    </reaction>
</comment>
<comment type="catalytic activity">
    <reaction>
        <text>L-threonyl-[protein] + ATP = O-phospho-L-threonyl-[protein] + ADP + H(+)</text>
        <dbReference type="Rhea" id="RHEA:46608"/>
        <dbReference type="Rhea" id="RHEA-COMP:11060"/>
        <dbReference type="Rhea" id="RHEA-COMP:11605"/>
        <dbReference type="ChEBI" id="CHEBI:15378"/>
        <dbReference type="ChEBI" id="CHEBI:30013"/>
        <dbReference type="ChEBI" id="CHEBI:30616"/>
        <dbReference type="ChEBI" id="CHEBI:61977"/>
        <dbReference type="ChEBI" id="CHEBI:456216"/>
        <dbReference type="EC" id="2.7.11.1"/>
    </reaction>
</comment>
<comment type="subunit">
    <text evidence="1">Interacts with the Axin complex (By similarity). Interacts with TUT1, leading to TUT1 phosphorylation (By similarity). Interacts with FAM83A, FAM83B, FAM83C, FAM83D, FAM83E, FAM83F, FAM83G and FAM83H (via DUF1669). Interaction with FAM83H recruits CSNK1A1 to keratin filaments (By similarity).</text>
</comment>
<comment type="subcellular location">
    <subcellularLocation>
        <location evidence="1">Cytoplasm</location>
    </subcellularLocation>
    <subcellularLocation>
        <location evidence="1">Cytoplasm</location>
        <location evidence="1">Cytoskeleton</location>
        <location evidence="1">Microtubule organizing center</location>
        <location evidence="1">Centrosome</location>
    </subcellularLocation>
    <subcellularLocation>
        <location evidence="1">Chromosome</location>
        <location evidence="1">Centromere</location>
        <location evidence="1">Kinetochore</location>
    </subcellularLocation>
    <subcellularLocation>
        <location evidence="1">Nucleus speckle</location>
    </subcellularLocation>
    <subcellularLocation>
        <location evidence="2">Cytoplasm</location>
        <location evidence="2">Cytoskeleton</location>
        <location evidence="2">Cilium basal body</location>
    </subcellularLocation>
    <subcellularLocation>
        <location evidence="2">Cytoplasm</location>
        <location evidence="2">Cytoskeleton</location>
        <location evidence="2">Spindle</location>
    </subcellularLocation>
    <text evidence="1">Localizes to the centrosome in interphase cells, and to kinetochore fibers during mitosis. Also recruited to the keratin cytoskeleton.</text>
</comment>
<comment type="PTM">
    <text evidence="1">Phosphorylated by MTOR in response to mitogenic stimulation, leading to its activation.</text>
</comment>
<comment type="similarity">
    <text evidence="5">Belongs to the protein kinase superfamily. CK1 Ser/Thr protein kinase family. Casein kinase I subfamily.</text>
</comment>
<proteinExistence type="evidence at transcript level"/>
<name>KC1A_PIG</name>
<dbReference type="EC" id="2.7.11.1"/>
<dbReference type="EMBL" id="F22872">
    <property type="protein sequence ID" value="CAA23396.1"/>
    <property type="molecule type" value="mRNA"/>
</dbReference>
<dbReference type="SMR" id="O19175"/>
<dbReference type="STRING" id="9823.ENSSSCP00000060731"/>
<dbReference type="BindingDB" id="O19175"/>
<dbReference type="ChEMBL" id="CHEMBL1781858"/>
<dbReference type="PaxDb" id="9823-ENSSSCP00000015364"/>
<dbReference type="PeptideAtlas" id="O19175"/>
<dbReference type="eggNOG" id="KOG1163">
    <property type="taxonomic scope" value="Eukaryota"/>
</dbReference>
<dbReference type="HOGENOM" id="CLU_019279_2_0_1"/>
<dbReference type="InParanoid" id="O19175"/>
<dbReference type="Proteomes" id="UP000008227">
    <property type="component" value="Unplaced"/>
</dbReference>
<dbReference type="Proteomes" id="UP000314985">
    <property type="component" value="Unplaced"/>
</dbReference>
<dbReference type="Proteomes" id="UP000694570">
    <property type="component" value="Unplaced"/>
</dbReference>
<dbReference type="Proteomes" id="UP000694571">
    <property type="component" value="Unplaced"/>
</dbReference>
<dbReference type="Proteomes" id="UP000694720">
    <property type="component" value="Unplaced"/>
</dbReference>
<dbReference type="Proteomes" id="UP000694722">
    <property type="component" value="Unplaced"/>
</dbReference>
<dbReference type="Proteomes" id="UP000694723">
    <property type="component" value="Unplaced"/>
</dbReference>
<dbReference type="Proteomes" id="UP000694724">
    <property type="component" value="Unplaced"/>
</dbReference>
<dbReference type="Proteomes" id="UP000694725">
    <property type="component" value="Unplaced"/>
</dbReference>
<dbReference type="Proteomes" id="UP000694726">
    <property type="component" value="Unplaced"/>
</dbReference>
<dbReference type="Proteomes" id="UP000694727">
    <property type="component" value="Unplaced"/>
</dbReference>
<dbReference type="Proteomes" id="UP000694728">
    <property type="component" value="Unplaced"/>
</dbReference>
<dbReference type="GO" id="GO:0005813">
    <property type="term" value="C:centrosome"/>
    <property type="evidence" value="ECO:0007669"/>
    <property type="project" value="UniProtKB-SubCell"/>
</dbReference>
<dbReference type="GO" id="GO:0036064">
    <property type="term" value="C:ciliary basal body"/>
    <property type="evidence" value="ECO:0000250"/>
    <property type="project" value="UniProtKB"/>
</dbReference>
<dbReference type="GO" id="GO:0005737">
    <property type="term" value="C:cytoplasm"/>
    <property type="evidence" value="ECO:0007669"/>
    <property type="project" value="UniProtKB-SubCell"/>
</dbReference>
<dbReference type="GO" id="GO:0000776">
    <property type="term" value="C:kinetochore"/>
    <property type="evidence" value="ECO:0007669"/>
    <property type="project" value="UniProtKB-KW"/>
</dbReference>
<dbReference type="GO" id="GO:0016607">
    <property type="term" value="C:nuclear speck"/>
    <property type="evidence" value="ECO:0000250"/>
    <property type="project" value="UniProtKB"/>
</dbReference>
<dbReference type="GO" id="GO:0005819">
    <property type="term" value="C:spindle"/>
    <property type="evidence" value="ECO:0000250"/>
    <property type="project" value="UniProtKB"/>
</dbReference>
<dbReference type="GO" id="GO:0005524">
    <property type="term" value="F:ATP binding"/>
    <property type="evidence" value="ECO:0007669"/>
    <property type="project" value="UniProtKB-KW"/>
</dbReference>
<dbReference type="GO" id="GO:0004672">
    <property type="term" value="F:protein kinase activity"/>
    <property type="evidence" value="ECO:0000250"/>
    <property type="project" value="UniProtKB"/>
</dbReference>
<dbReference type="GO" id="GO:0106310">
    <property type="term" value="F:protein serine kinase activity"/>
    <property type="evidence" value="ECO:0007669"/>
    <property type="project" value="RHEA"/>
</dbReference>
<dbReference type="GO" id="GO:0004674">
    <property type="term" value="F:protein serine/threonine kinase activity"/>
    <property type="evidence" value="ECO:0000250"/>
    <property type="project" value="UniProtKB"/>
</dbReference>
<dbReference type="GO" id="GO:0051301">
    <property type="term" value="P:cell division"/>
    <property type="evidence" value="ECO:0007669"/>
    <property type="project" value="UniProtKB-KW"/>
</dbReference>
<dbReference type="GO" id="GO:0045104">
    <property type="term" value="P:intermediate filament cytoskeleton organization"/>
    <property type="evidence" value="ECO:0000250"/>
    <property type="project" value="UniProtKB"/>
</dbReference>
<dbReference type="GO" id="GO:0006468">
    <property type="term" value="P:protein phosphorylation"/>
    <property type="evidence" value="ECO:0000250"/>
    <property type="project" value="UniProtKB"/>
</dbReference>
<dbReference type="GO" id="GO:0016055">
    <property type="term" value="P:Wnt signaling pathway"/>
    <property type="evidence" value="ECO:0007669"/>
    <property type="project" value="UniProtKB-KW"/>
</dbReference>
<dbReference type="FunFam" id="3.30.200.20:FF:001135">
    <property type="entry name" value="Casein kinase I isoform alpha"/>
    <property type="match status" value="1"/>
</dbReference>
<dbReference type="Gene3D" id="3.30.200.20">
    <property type="entry name" value="Phosphorylase Kinase, domain 1"/>
    <property type="match status" value="1"/>
</dbReference>
<dbReference type="Gene3D" id="1.10.510.10">
    <property type="entry name" value="Transferase(Phosphotransferase) domain 1"/>
    <property type="match status" value="1"/>
</dbReference>
<dbReference type="InterPro" id="IPR050235">
    <property type="entry name" value="CK1_Ser-Thr_kinase"/>
</dbReference>
<dbReference type="InterPro" id="IPR011009">
    <property type="entry name" value="Kinase-like_dom_sf"/>
</dbReference>
<dbReference type="InterPro" id="IPR000719">
    <property type="entry name" value="Prot_kinase_dom"/>
</dbReference>
<dbReference type="InterPro" id="IPR008271">
    <property type="entry name" value="Ser/Thr_kinase_AS"/>
</dbReference>
<dbReference type="PANTHER" id="PTHR11909">
    <property type="entry name" value="CASEIN KINASE-RELATED"/>
    <property type="match status" value="1"/>
</dbReference>
<dbReference type="Pfam" id="PF00069">
    <property type="entry name" value="Pkinase"/>
    <property type="match status" value="1"/>
</dbReference>
<dbReference type="SUPFAM" id="SSF56112">
    <property type="entry name" value="Protein kinase-like (PK-like)"/>
    <property type="match status" value="1"/>
</dbReference>
<dbReference type="PROSITE" id="PS50011">
    <property type="entry name" value="PROTEIN_KINASE_DOM"/>
    <property type="match status" value="1"/>
</dbReference>
<dbReference type="PROSITE" id="PS00108">
    <property type="entry name" value="PROTEIN_KINASE_ST"/>
    <property type="match status" value="1"/>
</dbReference>
<gene>
    <name type="primary">CSNK1A1</name>
</gene>
<sequence>GEEVAVKLESQKARHPQLLYESKLYKILQGGVGIPHIRWYGQEKDYNVLVMDLLGPSLEDLFNFCSRRFTMKTVLMLADQMISRIEYVHTKNFIHRDIKPDNFLMGIGRHCNKLFLIDFGLAKKY</sequence>
<protein>
    <recommendedName>
        <fullName>Casein kinase I isoform alpha</fullName>
        <shortName>CKI-alpha</shortName>
        <ecNumber>2.7.11.1</ecNumber>
    </recommendedName>
    <alternativeName>
        <fullName>CK1</fullName>
    </alternativeName>
</protein>
<reference key="1">
    <citation type="journal article" date="1996" name="Mamm. Genome">
        <title>Evaluation and characterization of a porcine small intestine cDNA library: analysis of 839 clones.</title>
        <authorList>
            <person name="Winteroe A.K."/>
            <person name="Fredholm M."/>
            <person name="Davies W."/>
        </authorList>
    </citation>
    <scope>NUCLEOTIDE SEQUENCE [LARGE SCALE MRNA]</scope>
    <source>
        <tissue>Small intestine</tissue>
    </source>
</reference>